<protein>
    <recommendedName>
        <fullName>Muscle calcium channel subunit alpha-1</fullName>
    </recommendedName>
    <alternativeName>
        <fullName>MDL-alpha-1</fullName>
    </alternativeName>
</protein>
<sequence length="1687" mass="193875">MDDAVCPTETDNVQNKQKATTPKRTQRRGGKQQLDRPERALFCLTLKNPLRIFCIKIVDSKLFEYFILLTIFANCVALAVYTPYPSGDSNITNQMLEKIEYIFLVIFTSECVMKIIAYGFVLHTGSYLRNGWNFLDFFIVVIGMISTALSNLVKEGFDVKALRAFRVLRPLRLVSGVPSLQVVLNSILKAMIPLLHIALLVLFVIIIYAIIGLELFSGKLHKTCRHSNTGEYLNDLDELHACGVGFKCPSGYECFDDWVGPNDGITNFDNFGLSMLTVFQCITLEGWTDVLYSIQDAMGSSWEWIYFVSMVILGAFFVMNLILGVLSGEFSKERTKAKNRGDFQKLREKQQIEEDLRGYLDWITQAEDIEPDPDAQIIEDCHKNKVKEVVSIDNLKDHENETQQTDSWFRSQKKYLERINRRIRRACRKAVKSQAFYWLIILLVFLNTGVLATEHYRQPIWLDQFQEYTNIFFIALFTCEMILKMYSLGFQGYFVSLFNRFDCFVVIGSISEMVLTSSELMAPLGVSVLRCVRLLRVFKVTKYWHSLSNLVASLLNSIQSIASLLLLLFLFIVIFGLLGMQVFGGRFTFKPEEEKPRSNFDSFYQSLLTVFQILTGEDWNVVMYDGIRAYGGVFSFGIVACIYYIILFICGNYILLNVFLAIAVDNLADADSLSTIEKEDESQIQLDNQIKNEMENEEYLQNGDHISFKAEFGADLDTYLQDEECGSYSDDENTYNKLGGVKQRVSSLPRRNTNTDMDRIKKDIPYGTSFFIFSHTNRFRIFCHRLCNHSNFGNFILCCIMFSSAMLAAENPLKADASRNIVLNKFDYFFTAVFTIELVLKLISYGFVLHDGAFCRSAFNLLDLLVVCVSLISIFFNSNAISVVKILRVLRVLRPLRAINRAKGLKHVVQCVIVAVKTIGNIVLVTCLLQFMFAVIGVQLFKGKFFSCSDGSKVYESDCHGTYLFYENGDINKPRLKEREWKNNKFHFDDVAKAMLTLFTVSTFEGWPTLLYVSIDSNKENGGPIYNFRPIVAAYYIIYIIIIAFFMVNIFVGFVIVTFQNEGEQEYKNCELDKNQRNCIEFALKAKPVRRYIPKHSIQYKVWWFVTSSSFEYSIFVLIMINTVTLAMKFYKQPEYYSEILDALNMIFTAVFSLEFIFKLAAFRFKNYFGDAWNTFDFIIVLGSFIDIVYSEIKTKEQALATCDGQSCNKAKGGSTLISINFFRLFRVMRLVKLLSKGEGIRTLLWTFIKSFQALPYVALLIVMLFFIYAVIGMQVFGKIMLEEGTSIDRNNNFQTFPQAVLVLFRSATGEAWQEIMMACSPRDDVKCDPESDAVNNCGSSIAFPYFISFYVLCSFLIINLFVAVIMDNFDYLTRDWSILGPHHLDEFIRLWSEYDPDAKGRIKHLDVVTLLRKISPPLGFGKLCPHRMACKRLVSMNMPLNSDGTVLFNATLFAVVRLPLAIKTDGNIDEANAELRATIKQIWKRTNPRLLDQVVLTGNDDEVTVGKFYATYLIQDYFRRFKKRKEQEGKCDQTENAVTLQAGLRTLQQNSPALKRTISGYLDELASEADPMHRRHHSLFGKVMSSLLRHEEITSSKIKHLSRTKTIPYQVEFLQHKVQLERNKDCLTSASDDISIEKIIRKQNKYNGQYFNSEANFMDNIKYTPRYDGEEYEMEDPKSKDKDEEF</sequence>
<reference key="1">
    <citation type="journal article" date="1994" name="FEBS Lett.">
        <title>Insect calcium channels. Molecular cloning of an alpha 1-subunit from housefly (Musca domestica) muscle.</title>
        <authorList>
            <person name="Grabner M."/>
            <person name="Bachmann A."/>
            <person name="Rosenthal F."/>
            <person name="Striessnig J."/>
            <person name="Schultz C."/>
            <person name="Tautz D."/>
            <person name="Glossmann H."/>
        </authorList>
    </citation>
    <scope>NUCLEOTIDE SEQUENCE [MRNA]</scope>
    <source>
        <tissue>Muscle</tissue>
    </source>
</reference>
<comment type="function">
    <text evidence="1">Voltage-sensitive calcium channels (VSCC) mediate the entry of calcium ions into excitable cells and are also involved in a variety of calcium-dependent processes, including muscle contraction, hormone or neurotransmitter release, gene expression, cell motility, cell division and cell death (By similarity). MDL-alpha1 encodes a dihydropyridine- and diltiazem-sensitive current in larval body wall muscle.</text>
</comment>
<comment type="subcellular location">
    <subcellularLocation>
        <location>Membrane</location>
        <topology>Multi-pass membrane protein</topology>
    </subcellularLocation>
</comment>
<comment type="tissue specificity">
    <text>Predominantly expressed in the larval body wall musculature. In adults, highest expression in thorax followed by head and at a lower extent by abdomen.</text>
</comment>
<comment type="developmental stage">
    <text>Late embryonic.</text>
</comment>
<comment type="domain">
    <text>Each of the four internal repeats contains five hydrophobic transmembrane segments (S1, S2, S3, S5, S6) and one positively charged transmembrane segment (S4). S4 segments probably represent the voltage-sensor and are characterized by a series of positively charged amino acids at every third position.</text>
</comment>
<comment type="similarity">
    <text evidence="5">Belongs to the calcium channel alpha-1 subunit (TC 1.A.1.11) family.</text>
</comment>
<organism>
    <name type="scientific">Musca domestica</name>
    <name type="common">House fly</name>
    <dbReference type="NCBI Taxonomy" id="7370"/>
    <lineage>
        <taxon>Eukaryota</taxon>
        <taxon>Metazoa</taxon>
        <taxon>Ecdysozoa</taxon>
        <taxon>Arthropoda</taxon>
        <taxon>Hexapoda</taxon>
        <taxon>Insecta</taxon>
        <taxon>Pterygota</taxon>
        <taxon>Neoptera</taxon>
        <taxon>Endopterygota</taxon>
        <taxon>Diptera</taxon>
        <taxon>Brachycera</taxon>
        <taxon>Muscomorpha</taxon>
        <taxon>Muscoidea</taxon>
        <taxon>Muscidae</taxon>
        <taxon>Musca</taxon>
    </lineage>
</organism>
<accession>Q25452</accession>
<dbReference type="EMBL" id="Z31723">
    <property type="protein sequence ID" value="CAA83514.1"/>
    <property type="molecule type" value="mRNA"/>
</dbReference>
<dbReference type="PIR" id="S41742">
    <property type="entry name" value="S41742"/>
</dbReference>
<dbReference type="SMR" id="Q25452"/>
<dbReference type="STRING" id="7370.Q25452"/>
<dbReference type="VEuPathDB" id="VectorBase:MDOA002080"/>
<dbReference type="VEuPathDB" id="VectorBase:MDOA005409"/>
<dbReference type="VEuPathDB" id="VectorBase:MDOA010384"/>
<dbReference type="VEuPathDB" id="VectorBase:MDOA014412"/>
<dbReference type="VEuPathDB" id="VectorBase:MDOMA2_002561"/>
<dbReference type="eggNOG" id="KOG0017">
    <property type="taxonomic scope" value="Eukaryota"/>
</dbReference>
<dbReference type="eggNOG" id="KOG2301">
    <property type="taxonomic scope" value="Eukaryota"/>
</dbReference>
<dbReference type="Proteomes" id="UP000694905">
    <property type="component" value="Unplaced"/>
</dbReference>
<dbReference type="GO" id="GO:0005891">
    <property type="term" value="C:voltage-gated calcium channel complex"/>
    <property type="evidence" value="ECO:0007669"/>
    <property type="project" value="InterPro"/>
</dbReference>
<dbReference type="GO" id="GO:0008331">
    <property type="term" value="F:high voltage-gated calcium channel activity"/>
    <property type="evidence" value="ECO:0007669"/>
    <property type="project" value="TreeGrafter"/>
</dbReference>
<dbReference type="GO" id="GO:0046872">
    <property type="term" value="F:metal ion binding"/>
    <property type="evidence" value="ECO:0007669"/>
    <property type="project" value="UniProtKB-KW"/>
</dbReference>
<dbReference type="GO" id="GO:0098703">
    <property type="term" value="P:calcium ion import across plasma membrane"/>
    <property type="evidence" value="ECO:0007669"/>
    <property type="project" value="TreeGrafter"/>
</dbReference>
<dbReference type="FunFam" id="1.10.287.70:FF:000009">
    <property type="entry name" value="Voltage-dependent L-type calcium channel subunit alpha"/>
    <property type="match status" value="1"/>
</dbReference>
<dbReference type="FunFam" id="1.10.287.70:FF:000107">
    <property type="entry name" value="Voltage-dependent L-type calcium channel subunit alpha"/>
    <property type="match status" value="1"/>
</dbReference>
<dbReference type="FunFam" id="1.20.120.350:FF:000001">
    <property type="entry name" value="Voltage-dependent L-type calcium channel subunit alpha"/>
    <property type="match status" value="1"/>
</dbReference>
<dbReference type="FunFam" id="1.20.120.350:FF:000006">
    <property type="entry name" value="Voltage-dependent L-type calcium channel subunit alpha"/>
    <property type="match status" value="1"/>
</dbReference>
<dbReference type="FunFam" id="1.20.120.350:FF:000010">
    <property type="entry name" value="Voltage-dependent L-type calcium channel subunit alpha"/>
    <property type="match status" value="1"/>
</dbReference>
<dbReference type="FunFam" id="1.20.120.350:FF:000064">
    <property type="entry name" value="Voltage-dependent L-type calcium channel subunit alpha"/>
    <property type="match status" value="1"/>
</dbReference>
<dbReference type="Gene3D" id="1.10.287.70">
    <property type="match status" value="4"/>
</dbReference>
<dbReference type="Gene3D" id="6.10.250.2180">
    <property type="match status" value="1"/>
</dbReference>
<dbReference type="Gene3D" id="6.10.250.2500">
    <property type="match status" value="1"/>
</dbReference>
<dbReference type="Gene3D" id="1.20.120.350">
    <property type="entry name" value="Voltage-gated potassium channels. Chain C"/>
    <property type="match status" value="4"/>
</dbReference>
<dbReference type="InterPro" id="IPR031649">
    <property type="entry name" value="GPHH_dom"/>
</dbReference>
<dbReference type="InterPro" id="IPR005821">
    <property type="entry name" value="Ion_trans_dom"/>
</dbReference>
<dbReference type="InterPro" id="IPR014873">
    <property type="entry name" value="VDCC_a1su_IQ"/>
</dbReference>
<dbReference type="InterPro" id="IPR050599">
    <property type="entry name" value="VDCC_alpha-1_subunit"/>
</dbReference>
<dbReference type="InterPro" id="IPR005446">
    <property type="entry name" value="VDCC_L_a1su"/>
</dbReference>
<dbReference type="InterPro" id="IPR002077">
    <property type="entry name" value="VDCCAlpha1"/>
</dbReference>
<dbReference type="InterPro" id="IPR027359">
    <property type="entry name" value="Volt_channel_dom_sf"/>
</dbReference>
<dbReference type="PANTHER" id="PTHR45628">
    <property type="entry name" value="VOLTAGE-DEPENDENT CALCIUM CHANNEL TYPE A SUBUNIT ALPHA-1"/>
    <property type="match status" value="1"/>
</dbReference>
<dbReference type="PANTHER" id="PTHR45628:SF1">
    <property type="entry name" value="VOLTAGE-DEPENDENT CALCIUM CHANNEL TYPE D SUBUNIT ALPHA-1"/>
    <property type="match status" value="1"/>
</dbReference>
<dbReference type="Pfam" id="PF08763">
    <property type="entry name" value="Ca_chan_IQ"/>
    <property type="match status" value="1"/>
</dbReference>
<dbReference type="Pfam" id="PF16905">
    <property type="entry name" value="GPHH"/>
    <property type="match status" value="1"/>
</dbReference>
<dbReference type="Pfam" id="PF00520">
    <property type="entry name" value="Ion_trans"/>
    <property type="match status" value="4"/>
</dbReference>
<dbReference type="PRINTS" id="PR00167">
    <property type="entry name" value="CACHANNEL"/>
</dbReference>
<dbReference type="PRINTS" id="PR01630">
    <property type="entry name" value="LVDCCALPHA1"/>
</dbReference>
<dbReference type="SMART" id="SM01062">
    <property type="entry name" value="Ca_chan_IQ"/>
    <property type="match status" value="1"/>
</dbReference>
<dbReference type="SUPFAM" id="SSF81324">
    <property type="entry name" value="Voltage-gated potassium channels"/>
    <property type="match status" value="4"/>
</dbReference>
<proteinExistence type="evidence at transcript level"/>
<name>CAC1M_MUSDO</name>
<evidence type="ECO:0000250" key="1"/>
<evidence type="ECO:0000250" key="2">
    <source>
        <dbReference type="UniProtKB" id="P07293"/>
    </source>
</evidence>
<evidence type="ECO:0000255" key="3"/>
<evidence type="ECO:0000256" key="4">
    <source>
        <dbReference type="SAM" id="MobiDB-lite"/>
    </source>
</evidence>
<evidence type="ECO:0000305" key="5"/>
<keyword id="KW-0106">Calcium</keyword>
<keyword id="KW-0107">Calcium channel</keyword>
<keyword id="KW-0109">Calcium transport</keyword>
<keyword id="KW-0325">Glycoprotein</keyword>
<keyword id="KW-0407">Ion channel</keyword>
<keyword id="KW-0406">Ion transport</keyword>
<keyword id="KW-0472">Membrane</keyword>
<keyword id="KW-0479">Metal-binding</keyword>
<keyword id="KW-0597">Phosphoprotein</keyword>
<keyword id="KW-1185">Reference proteome</keyword>
<keyword id="KW-0677">Repeat</keyword>
<keyword id="KW-0812">Transmembrane</keyword>
<keyword id="KW-1133">Transmembrane helix</keyword>
<keyword id="KW-0813">Transport</keyword>
<keyword id="KW-0851">Voltage-gated channel</keyword>
<feature type="chain" id="PRO_0000053961" description="Muscle calcium channel subunit alpha-1">
    <location>
        <begin position="1"/>
        <end position="1687"/>
    </location>
</feature>
<feature type="topological domain" description="Cytoplasmic" evidence="3">
    <location>
        <begin position="1"/>
        <end position="61"/>
    </location>
</feature>
<feature type="transmembrane region" description="Helical; Name=S1 of repeat I" evidence="3">
    <location>
        <begin position="62"/>
        <end position="80"/>
    </location>
</feature>
<feature type="topological domain" description="Extracellular" evidence="3">
    <location>
        <begin position="81"/>
        <end position="99"/>
    </location>
</feature>
<feature type="transmembrane region" description="Helical; Name=S2 of repeat I" evidence="3">
    <location>
        <begin position="100"/>
        <end position="117"/>
    </location>
</feature>
<feature type="topological domain" description="Cytoplasmic" evidence="3">
    <location>
        <begin position="118"/>
        <end position="130"/>
    </location>
</feature>
<feature type="transmembrane region" description="Helical; Name=S3 of repeat I" evidence="3">
    <location>
        <begin position="131"/>
        <end position="145"/>
    </location>
</feature>
<feature type="topological domain" description="Extracellular" evidence="3">
    <location>
        <begin position="146"/>
        <end position="157"/>
    </location>
</feature>
<feature type="transmembrane region" description="Helical; Name=S4 of repeat I" evidence="3">
    <location>
        <begin position="158"/>
        <end position="176"/>
    </location>
</feature>
<feature type="topological domain" description="Cytoplasmic" evidence="3">
    <location>
        <begin position="177"/>
        <end position="196"/>
    </location>
</feature>
<feature type="transmembrane region" description="Helical; Name=S5 of repeat I" evidence="3">
    <location>
        <begin position="197"/>
        <end position="216"/>
    </location>
</feature>
<feature type="topological domain" description="Extracellular" evidence="3">
    <location>
        <begin position="217"/>
        <end position="302"/>
    </location>
</feature>
<feature type="transmembrane region" description="Helical; Name=S6 of repeat I" evidence="3">
    <location>
        <begin position="303"/>
        <end position="327"/>
    </location>
</feature>
<feature type="topological domain" description="Cytoplasmic" evidence="3">
    <location>
        <begin position="328"/>
        <end position="434"/>
    </location>
</feature>
<feature type="transmembrane region" description="Helical; Name=S1 of repeat II" evidence="3">
    <location>
        <begin position="435"/>
        <end position="454"/>
    </location>
</feature>
<feature type="topological domain" description="Extracellular" evidence="3">
    <location>
        <begin position="455"/>
        <end position="467"/>
    </location>
</feature>
<feature type="transmembrane region" description="Helical; Name=S2 of repeat II" evidence="3">
    <location>
        <begin position="468"/>
        <end position="487"/>
    </location>
</feature>
<feature type="topological domain" description="Cytoplasmic" evidence="3">
    <location>
        <begin position="488"/>
        <end position="496"/>
    </location>
</feature>
<feature type="transmembrane region" description="Helical; Name=S3 of repeat II" evidence="3">
    <location>
        <begin position="497"/>
        <end position="515"/>
    </location>
</feature>
<feature type="topological domain" description="Extracellular" evidence="3">
    <location>
        <begin position="516"/>
        <end position="525"/>
    </location>
</feature>
<feature type="transmembrane region" description="Helical; Name=S4 of repeat II" evidence="3">
    <location>
        <begin position="526"/>
        <end position="544"/>
    </location>
</feature>
<feature type="topological domain" description="Cytoplasmic" evidence="3">
    <location>
        <begin position="545"/>
        <end position="563"/>
    </location>
</feature>
<feature type="transmembrane region" description="Helical; Name=S5 of repeat II" evidence="3">
    <location>
        <begin position="564"/>
        <end position="583"/>
    </location>
</feature>
<feature type="topological domain" description="Extracellular" evidence="3">
    <location>
        <begin position="584"/>
        <end position="639"/>
    </location>
</feature>
<feature type="transmembrane region" description="Helical; Name=S6 of repeat II" evidence="3">
    <location>
        <begin position="640"/>
        <end position="664"/>
    </location>
</feature>
<feature type="topological domain" description="Cytoplasmic" evidence="3">
    <location>
        <begin position="665"/>
        <end position="785"/>
    </location>
</feature>
<feature type="transmembrane region" description="Helical; Name=S1 of repeat III" evidence="3">
    <location>
        <begin position="786"/>
        <end position="809"/>
    </location>
</feature>
<feature type="topological domain" description="Extracellular" evidence="3">
    <location>
        <begin position="810"/>
        <end position="826"/>
    </location>
</feature>
<feature type="transmembrane region" description="Helical; Name=S2 of repeat III" evidence="3">
    <location>
        <begin position="827"/>
        <end position="846"/>
    </location>
</feature>
<feature type="topological domain" description="Cytoplasmic" evidence="3">
    <location>
        <begin position="847"/>
        <end position="854"/>
    </location>
</feature>
<feature type="transmembrane region" description="Helical; Name=S3 of repeat III" evidence="3">
    <location>
        <begin position="855"/>
        <end position="877"/>
    </location>
</feature>
<feature type="topological domain" description="Extracellular" evidence="3">
    <location>
        <begin position="878"/>
        <end position="885"/>
    </location>
</feature>
<feature type="transmembrane region" description="Helical; Name=S4 of repeat III" evidence="3">
    <location>
        <begin position="886"/>
        <end position="900"/>
    </location>
</feature>
<feature type="topological domain" description="Cytoplasmic" evidence="3">
    <location>
        <begin position="901"/>
        <end position="921"/>
    </location>
</feature>
<feature type="transmembrane region" description="Helical; Name=S5 of repeat III" evidence="3">
    <location>
        <begin position="922"/>
        <end position="941"/>
    </location>
</feature>
<feature type="topological domain" description="Extracellular" evidence="3">
    <location>
        <begin position="942"/>
        <end position="1030"/>
    </location>
</feature>
<feature type="transmembrane region" description="Helical; Name=S6 of repeat III" evidence="3">
    <location>
        <begin position="1031"/>
        <end position="1055"/>
    </location>
</feature>
<feature type="topological domain" description="Cytoplasmic" evidence="3">
    <location>
        <begin position="1056"/>
        <end position="1110"/>
    </location>
</feature>
<feature type="transmembrane region" description="Helical; Name=S1 of repeat IV" evidence="3">
    <location>
        <begin position="1111"/>
        <end position="1129"/>
    </location>
</feature>
<feature type="topological domain" description="Extracellular" evidence="3">
    <location>
        <begin position="1130"/>
        <end position="1143"/>
    </location>
</feature>
<feature type="transmembrane region" description="Helical; Name=S2 of repeat IV" evidence="3">
    <location>
        <begin position="1144"/>
        <end position="1163"/>
    </location>
</feature>
<feature type="topological domain" description="Cytoplasmic" evidence="3">
    <location>
        <begin position="1164"/>
        <end position="1172"/>
    </location>
</feature>
<feature type="transmembrane region" description="Helical; Name=S3 of repeat IV" evidence="3">
    <location>
        <begin position="1173"/>
        <end position="1191"/>
    </location>
</feature>
<feature type="topological domain" description="Extracellular" evidence="3">
    <location>
        <begin position="1192"/>
        <end position="1219"/>
    </location>
</feature>
<feature type="transmembrane region" description="Helical; Name=S4 of repeat IV" evidence="3">
    <location>
        <begin position="1220"/>
        <end position="1238"/>
    </location>
</feature>
<feature type="topological domain" description="Cytoplasmic" evidence="3">
    <location>
        <begin position="1239"/>
        <end position="1257"/>
    </location>
</feature>
<feature type="transmembrane region" description="Helical; Name=S5 of repeat IV" evidence="3">
    <location>
        <begin position="1258"/>
        <end position="1277"/>
    </location>
</feature>
<feature type="topological domain" description="Extracellular" evidence="3">
    <location>
        <begin position="1278"/>
        <end position="1343"/>
    </location>
</feature>
<feature type="transmembrane region" description="Helical; Name=S6 of repeat IV" evidence="3">
    <location>
        <begin position="1344"/>
        <end position="1362"/>
    </location>
</feature>
<feature type="topological domain" description="Cytoplasmic" evidence="3">
    <location>
        <begin position="1363"/>
        <end position="1687"/>
    </location>
</feature>
<feature type="repeat" description="I">
    <location>
        <begin position="48"/>
        <end position="330"/>
    </location>
</feature>
<feature type="repeat" description="II">
    <location>
        <begin position="420"/>
        <end position="667"/>
    </location>
</feature>
<feature type="repeat" description="III">
    <location>
        <begin position="777"/>
        <end position="1059"/>
    </location>
</feature>
<feature type="repeat" description="IV">
    <location>
        <begin position="1096"/>
        <end position="1370"/>
    </location>
</feature>
<feature type="region of interest" description="Disordered" evidence="4">
    <location>
        <begin position="1"/>
        <end position="33"/>
    </location>
</feature>
<feature type="region of interest" description="Dihydropyridine binding" evidence="1">
    <location>
        <begin position="979"/>
        <end position="1068"/>
    </location>
</feature>
<feature type="region of interest" description="Dihydropyridine binding" evidence="1">
    <location>
        <begin position="1327"/>
        <end position="1389"/>
    </location>
</feature>
<feature type="region of interest" description="Phenylalkylamine binding" evidence="1">
    <location>
        <begin position="1337"/>
        <end position="1378"/>
    </location>
</feature>
<feature type="compositionally biased region" description="Polar residues" evidence="4">
    <location>
        <begin position="9"/>
        <end position="23"/>
    </location>
</feature>
<feature type="binding site" evidence="2">
    <location>
        <position position="285"/>
    </location>
    <ligand>
        <name>Ca(2+)</name>
        <dbReference type="ChEBI" id="CHEBI:29108"/>
    </ligand>
</feature>
<feature type="binding site" evidence="2">
    <location>
        <position position="617"/>
    </location>
    <ligand>
        <name>Ca(2+)</name>
        <dbReference type="ChEBI" id="CHEBI:29108"/>
    </ligand>
</feature>
<feature type="binding site" evidence="2">
    <location>
        <position position="1005"/>
    </location>
    <ligand>
        <name>Ca(2+)</name>
        <dbReference type="ChEBI" id="CHEBI:29108"/>
    </ligand>
</feature>
<feature type="glycosylation site" description="N-linked (GlcNAc...) asparagine" evidence="3">
    <location>
        <position position="90"/>
    </location>
</feature>